<keyword id="KW-1185">Reference proteome</keyword>
<keyword id="KW-0687">Ribonucleoprotein</keyword>
<keyword id="KW-0689">Ribosomal protein</keyword>
<keyword id="KW-0694">RNA-binding</keyword>
<keyword id="KW-0699">rRNA-binding</keyword>
<organism>
    <name type="scientific">Thermosynechococcus vestitus (strain NIES-2133 / IAM M-273 / BP-1)</name>
    <dbReference type="NCBI Taxonomy" id="197221"/>
    <lineage>
        <taxon>Bacteria</taxon>
        <taxon>Bacillati</taxon>
        <taxon>Cyanobacteriota</taxon>
        <taxon>Cyanophyceae</taxon>
        <taxon>Acaryochloridales</taxon>
        <taxon>Thermosynechococcaceae</taxon>
        <taxon>Thermosynechococcus</taxon>
    </lineage>
</organism>
<protein>
    <recommendedName>
        <fullName evidence="1">Large ribosomal subunit protein uL2</fullName>
    </recommendedName>
    <alternativeName>
        <fullName evidence="3">50S ribosomal protein L2</fullName>
    </alternativeName>
</protein>
<sequence>MGIRVYRPYTPGVRQKTVSDFAEITTDKPEKSLTRGFKRDKGRNNRGVITSRRRGGGHKRRYRIVDFRRSSKLNIPAKVATVEYDPNRNARIALLHYRDGEKRYILHPRDLTPGTEIIASPDAPIEVGNALPLGKIPLGTSVHNVEITPGRGAQMVRAAGAMAQVVAKEGDMVTLKLPSGEVRLFRKECYATIGQVGNVEANNISLGKAGRNRWKGRRPKVRGSVMNPVDHPHGGGEGRAPIGRPGPVTPWGKPTLGYKTRKKKKLSDALIVRRRKKSSKRGRGGRQS</sequence>
<dbReference type="EMBL" id="BA000039">
    <property type="protein sequence ID" value="BAC07637.1"/>
    <property type="molecule type" value="Genomic_DNA"/>
</dbReference>
<dbReference type="RefSeq" id="NP_680875.1">
    <property type="nucleotide sequence ID" value="NC_004113.1"/>
</dbReference>
<dbReference type="RefSeq" id="WP_011055939.1">
    <property type="nucleotide sequence ID" value="NC_004113.1"/>
</dbReference>
<dbReference type="SMR" id="Q8DMM8"/>
<dbReference type="STRING" id="197221.gene:10746662"/>
<dbReference type="EnsemblBacteria" id="BAC07637">
    <property type="protein sequence ID" value="BAC07637"/>
    <property type="gene ID" value="BAC07637"/>
</dbReference>
<dbReference type="KEGG" id="tel:tlr0084"/>
<dbReference type="PATRIC" id="fig|197221.4.peg.87"/>
<dbReference type="eggNOG" id="COG0090">
    <property type="taxonomic scope" value="Bacteria"/>
</dbReference>
<dbReference type="Proteomes" id="UP000000440">
    <property type="component" value="Chromosome"/>
</dbReference>
<dbReference type="GO" id="GO:0015934">
    <property type="term" value="C:large ribosomal subunit"/>
    <property type="evidence" value="ECO:0007669"/>
    <property type="project" value="InterPro"/>
</dbReference>
<dbReference type="GO" id="GO:0019843">
    <property type="term" value="F:rRNA binding"/>
    <property type="evidence" value="ECO:0007669"/>
    <property type="project" value="UniProtKB-UniRule"/>
</dbReference>
<dbReference type="GO" id="GO:0003735">
    <property type="term" value="F:structural constituent of ribosome"/>
    <property type="evidence" value="ECO:0007669"/>
    <property type="project" value="InterPro"/>
</dbReference>
<dbReference type="GO" id="GO:0016740">
    <property type="term" value="F:transferase activity"/>
    <property type="evidence" value="ECO:0007669"/>
    <property type="project" value="InterPro"/>
</dbReference>
<dbReference type="GO" id="GO:0006412">
    <property type="term" value="P:translation"/>
    <property type="evidence" value="ECO:0007669"/>
    <property type="project" value="UniProtKB-UniRule"/>
</dbReference>
<dbReference type="FunFam" id="2.30.30.30:FF:000001">
    <property type="entry name" value="50S ribosomal protein L2"/>
    <property type="match status" value="1"/>
</dbReference>
<dbReference type="FunFam" id="2.40.50.140:FF:000003">
    <property type="entry name" value="50S ribosomal protein L2"/>
    <property type="match status" value="1"/>
</dbReference>
<dbReference type="FunFam" id="4.10.950.10:FF:000001">
    <property type="entry name" value="50S ribosomal protein L2"/>
    <property type="match status" value="1"/>
</dbReference>
<dbReference type="Gene3D" id="2.30.30.30">
    <property type="match status" value="1"/>
</dbReference>
<dbReference type="Gene3D" id="2.40.50.140">
    <property type="entry name" value="Nucleic acid-binding proteins"/>
    <property type="match status" value="1"/>
</dbReference>
<dbReference type="Gene3D" id="4.10.950.10">
    <property type="entry name" value="Ribosomal protein L2, domain 3"/>
    <property type="match status" value="1"/>
</dbReference>
<dbReference type="HAMAP" id="MF_01320_B">
    <property type="entry name" value="Ribosomal_uL2_B"/>
    <property type="match status" value="1"/>
</dbReference>
<dbReference type="InterPro" id="IPR012340">
    <property type="entry name" value="NA-bd_OB-fold"/>
</dbReference>
<dbReference type="InterPro" id="IPR014722">
    <property type="entry name" value="Rib_uL2_dom2"/>
</dbReference>
<dbReference type="InterPro" id="IPR002171">
    <property type="entry name" value="Ribosomal_uL2"/>
</dbReference>
<dbReference type="InterPro" id="IPR005880">
    <property type="entry name" value="Ribosomal_uL2_bac/org-type"/>
</dbReference>
<dbReference type="InterPro" id="IPR022669">
    <property type="entry name" value="Ribosomal_uL2_C"/>
</dbReference>
<dbReference type="InterPro" id="IPR022671">
    <property type="entry name" value="Ribosomal_uL2_CS"/>
</dbReference>
<dbReference type="InterPro" id="IPR014726">
    <property type="entry name" value="Ribosomal_uL2_dom3"/>
</dbReference>
<dbReference type="InterPro" id="IPR022666">
    <property type="entry name" value="Ribosomal_uL2_RNA-bd_dom"/>
</dbReference>
<dbReference type="InterPro" id="IPR008991">
    <property type="entry name" value="Translation_prot_SH3-like_sf"/>
</dbReference>
<dbReference type="NCBIfam" id="TIGR01171">
    <property type="entry name" value="rplB_bact"/>
    <property type="match status" value="1"/>
</dbReference>
<dbReference type="PANTHER" id="PTHR13691:SF5">
    <property type="entry name" value="LARGE RIBOSOMAL SUBUNIT PROTEIN UL2M"/>
    <property type="match status" value="1"/>
</dbReference>
<dbReference type="PANTHER" id="PTHR13691">
    <property type="entry name" value="RIBOSOMAL PROTEIN L2"/>
    <property type="match status" value="1"/>
</dbReference>
<dbReference type="Pfam" id="PF00181">
    <property type="entry name" value="Ribosomal_L2"/>
    <property type="match status" value="1"/>
</dbReference>
<dbReference type="Pfam" id="PF03947">
    <property type="entry name" value="Ribosomal_L2_C"/>
    <property type="match status" value="1"/>
</dbReference>
<dbReference type="PIRSF" id="PIRSF002158">
    <property type="entry name" value="Ribosomal_L2"/>
    <property type="match status" value="1"/>
</dbReference>
<dbReference type="SMART" id="SM01383">
    <property type="entry name" value="Ribosomal_L2"/>
    <property type="match status" value="1"/>
</dbReference>
<dbReference type="SMART" id="SM01382">
    <property type="entry name" value="Ribosomal_L2_C"/>
    <property type="match status" value="1"/>
</dbReference>
<dbReference type="SUPFAM" id="SSF50249">
    <property type="entry name" value="Nucleic acid-binding proteins"/>
    <property type="match status" value="1"/>
</dbReference>
<dbReference type="SUPFAM" id="SSF50104">
    <property type="entry name" value="Translation proteins SH3-like domain"/>
    <property type="match status" value="1"/>
</dbReference>
<dbReference type="PROSITE" id="PS00467">
    <property type="entry name" value="RIBOSOMAL_L2"/>
    <property type="match status" value="1"/>
</dbReference>
<evidence type="ECO:0000255" key="1">
    <source>
        <dbReference type="HAMAP-Rule" id="MF_01320"/>
    </source>
</evidence>
<evidence type="ECO:0000256" key="2">
    <source>
        <dbReference type="SAM" id="MobiDB-lite"/>
    </source>
</evidence>
<evidence type="ECO:0000305" key="3"/>
<reference key="1">
    <citation type="journal article" date="2002" name="DNA Res.">
        <title>Complete genome structure of the thermophilic cyanobacterium Thermosynechococcus elongatus BP-1.</title>
        <authorList>
            <person name="Nakamura Y."/>
            <person name="Kaneko T."/>
            <person name="Sato S."/>
            <person name="Ikeuchi M."/>
            <person name="Katoh H."/>
            <person name="Sasamoto S."/>
            <person name="Watanabe A."/>
            <person name="Iriguchi M."/>
            <person name="Kawashima K."/>
            <person name="Kimura T."/>
            <person name="Kishida Y."/>
            <person name="Kiyokawa C."/>
            <person name="Kohara M."/>
            <person name="Matsumoto M."/>
            <person name="Matsuno A."/>
            <person name="Nakazaki N."/>
            <person name="Shimpo S."/>
            <person name="Sugimoto M."/>
            <person name="Takeuchi C."/>
            <person name="Yamada M."/>
            <person name="Tabata S."/>
        </authorList>
    </citation>
    <scope>NUCLEOTIDE SEQUENCE [LARGE SCALE GENOMIC DNA]</scope>
    <source>
        <strain>NIES-2133 / IAM M-273 / BP-1</strain>
    </source>
</reference>
<gene>
    <name evidence="1" type="primary">rplB</name>
    <name evidence="1" type="synonym">rpl2</name>
    <name type="ordered locus">tlr0084</name>
</gene>
<feature type="chain" id="PRO_0000129636" description="Large ribosomal subunit protein uL2">
    <location>
        <begin position="1"/>
        <end position="288"/>
    </location>
</feature>
<feature type="region of interest" description="Disordered" evidence="2">
    <location>
        <begin position="29"/>
        <end position="59"/>
    </location>
</feature>
<feature type="region of interest" description="Disordered" evidence="2">
    <location>
        <begin position="210"/>
        <end position="288"/>
    </location>
</feature>
<feature type="compositionally biased region" description="Basic and acidic residues" evidence="2">
    <location>
        <begin position="29"/>
        <end position="43"/>
    </location>
</feature>
<feature type="compositionally biased region" description="Basic residues" evidence="2">
    <location>
        <begin position="210"/>
        <end position="221"/>
    </location>
</feature>
<feature type="compositionally biased region" description="Basic residues" evidence="2">
    <location>
        <begin position="272"/>
        <end position="288"/>
    </location>
</feature>
<accession>Q8DMM8</accession>
<comment type="function">
    <text evidence="1">One of the primary rRNA binding proteins. Required for association of the 30S and 50S subunits to form the 70S ribosome, for tRNA binding and peptide bond formation. It has been suggested to have peptidyltransferase activity; this is somewhat controversial. Makes several contacts with the 16S rRNA in the 70S ribosome.</text>
</comment>
<comment type="subunit">
    <text evidence="1">Part of the 50S ribosomal subunit. Forms a bridge to the 30S subunit in the 70S ribosome.</text>
</comment>
<comment type="similarity">
    <text evidence="1">Belongs to the universal ribosomal protein uL2 family.</text>
</comment>
<name>RL2_THEVB</name>
<proteinExistence type="inferred from homology"/>